<organism>
    <name type="scientific">Gibberella zeae (strain ATCC MYA-4620 / CBS 123657 / FGSC 9075 / NRRL 31084 / PH-1)</name>
    <name type="common">Wheat head blight fungus</name>
    <name type="synonym">Fusarium graminearum</name>
    <dbReference type="NCBI Taxonomy" id="229533"/>
    <lineage>
        <taxon>Eukaryota</taxon>
        <taxon>Fungi</taxon>
        <taxon>Dikarya</taxon>
        <taxon>Ascomycota</taxon>
        <taxon>Pezizomycotina</taxon>
        <taxon>Sordariomycetes</taxon>
        <taxon>Hypocreomycetidae</taxon>
        <taxon>Hypocreales</taxon>
        <taxon>Nectriaceae</taxon>
        <taxon>Fusarium</taxon>
    </lineage>
</organism>
<accession>Q4IB63</accession>
<accession>A0A0E0SP93</accession>
<accession>V6RBZ8</accession>
<comment type="function">
    <text evidence="1">Mannosyltransferase involved in glycosylphosphatidylinositol-anchor biosynthesis. Transfers the third mannose to Man2-GlcN-acyl-PI during GPI precursor assembly (By similarity).</text>
</comment>
<comment type="pathway">
    <text>Glycolipid biosynthesis; glycosylphosphatidylinositol-anchor biosynthesis.</text>
</comment>
<comment type="subcellular location">
    <subcellularLocation>
        <location evidence="1">Endoplasmic reticulum membrane</location>
        <topology evidence="1">Multi-pass membrane protein</topology>
    </subcellularLocation>
</comment>
<comment type="similarity">
    <text evidence="3">Belongs to the glycosyltransferase 22 family. PIGB subfamily.</text>
</comment>
<protein>
    <recommendedName>
        <fullName>GPI mannosyltransferase 3</fullName>
        <ecNumber>2.4.1.-</ecNumber>
    </recommendedName>
    <alternativeName>
        <fullName>GPI mannosyltransferase III</fullName>
        <shortName>GPI-MT-III</shortName>
    </alternativeName>
    <alternativeName>
        <fullName>Glycosylphosphatidylinositol-anchor biosynthesis protein 10</fullName>
    </alternativeName>
</protein>
<feature type="chain" id="PRO_0000246264" description="GPI mannosyltransferase 3">
    <location>
        <begin position="1"/>
        <end position="613"/>
    </location>
</feature>
<feature type="transmembrane region" description="Helical" evidence="2">
    <location>
        <begin position="22"/>
        <end position="42"/>
    </location>
</feature>
<feature type="transmembrane region" description="Helical" evidence="2">
    <location>
        <begin position="83"/>
        <end position="103"/>
    </location>
</feature>
<feature type="transmembrane region" description="Helical" evidence="2">
    <location>
        <begin position="106"/>
        <end position="126"/>
    </location>
</feature>
<feature type="transmembrane region" description="Helical" evidence="2">
    <location>
        <begin position="132"/>
        <end position="152"/>
    </location>
</feature>
<feature type="transmembrane region" description="Helical" evidence="2">
    <location>
        <begin position="168"/>
        <end position="188"/>
    </location>
</feature>
<feature type="transmembrane region" description="Helical" evidence="2">
    <location>
        <begin position="216"/>
        <end position="236"/>
    </location>
</feature>
<feature type="transmembrane region" description="Helical" evidence="2">
    <location>
        <begin position="252"/>
        <end position="272"/>
    </location>
</feature>
<feature type="transmembrane region" description="Helical" evidence="2">
    <location>
        <begin position="280"/>
        <end position="300"/>
    </location>
</feature>
<feature type="transmembrane region" description="Helical" evidence="2">
    <location>
        <begin position="309"/>
        <end position="329"/>
    </location>
</feature>
<feature type="transmembrane region" description="Helical" evidence="2">
    <location>
        <begin position="342"/>
        <end position="362"/>
    </location>
</feature>
<feature type="transmembrane region" description="Helical" evidence="2">
    <location>
        <begin position="369"/>
        <end position="389"/>
    </location>
</feature>
<feature type="transmembrane region" description="Helical" evidence="2">
    <location>
        <begin position="411"/>
        <end position="431"/>
    </location>
</feature>
<feature type="glycosylation site" description="N-linked (GlcNAc...) asparagine" evidence="2">
    <location>
        <position position="19"/>
    </location>
</feature>
<name>GPI10_GIBZE</name>
<keyword id="KW-0256">Endoplasmic reticulum</keyword>
<keyword id="KW-0325">Glycoprotein</keyword>
<keyword id="KW-0328">Glycosyltransferase</keyword>
<keyword id="KW-0337">GPI-anchor biosynthesis</keyword>
<keyword id="KW-0472">Membrane</keyword>
<keyword id="KW-1185">Reference proteome</keyword>
<keyword id="KW-0808">Transferase</keyword>
<keyword id="KW-0812">Transmembrane</keyword>
<keyword id="KW-1133">Transmembrane helix</keyword>
<evidence type="ECO:0000250" key="1"/>
<evidence type="ECO:0000255" key="2"/>
<evidence type="ECO:0000305" key="3"/>
<dbReference type="EC" id="2.4.1.-"/>
<dbReference type="EMBL" id="DS231665">
    <property type="protein sequence ID" value="ESU11517.1"/>
    <property type="molecule type" value="Genomic_DNA"/>
</dbReference>
<dbReference type="EMBL" id="HG970334">
    <property type="protein sequence ID" value="CEF88256.1"/>
    <property type="molecule type" value="Genomic_DNA"/>
</dbReference>
<dbReference type="RefSeq" id="XP_011324093.1">
    <property type="nucleotide sequence ID" value="XM_011325791.1"/>
</dbReference>
<dbReference type="FunCoup" id="Q4IB63">
    <property type="interactions" value="879"/>
</dbReference>
<dbReference type="STRING" id="229533.Q4IB63"/>
<dbReference type="GlyCosmos" id="Q4IB63">
    <property type="glycosylation" value="1 site, No reported glycans"/>
</dbReference>
<dbReference type="GeneID" id="23552724"/>
<dbReference type="KEGG" id="fgr:FGSG_05545"/>
<dbReference type="VEuPathDB" id="FungiDB:FGRAMPH1_01G18171"/>
<dbReference type="eggNOG" id="KOG1771">
    <property type="taxonomic scope" value="Eukaryota"/>
</dbReference>
<dbReference type="HOGENOM" id="CLU_012353_1_1_1"/>
<dbReference type="InParanoid" id="Q4IB63"/>
<dbReference type="OrthoDB" id="123739at110618"/>
<dbReference type="UniPathway" id="UPA00196"/>
<dbReference type="Proteomes" id="UP000070720">
    <property type="component" value="Chromosome 3"/>
</dbReference>
<dbReference type="GO" id="GO:0005789">
    <property type="term" value="C:endoplasmic reticulum membrane"/>
    <property type="evidence" value="ECO:0007669"/>
    <property type="project" value="UniProtKB-SubCell"/>
</dbReference>
<dbReference type="GO" id="GO:0000026">
    <property type="term" value="F:alpha-1,2-mannosyltransferase activity"/>
    <property type="evidence" value="ECO:0007669"/>
    <property type="project" value="TreeGrafter"/>
</dbReference>
<dbReference type="GO" id="GO:0006506">
    <property type="term" value="P:GPI anchor biosynthetic process"/>
    <property type="evidence" value="ECO:0007669"/>
    <property type="project" value="UniProtKB-UniPathway"/>
</dbReference>
<dbReference type="InterPro" id="IPR005599">
    <property type="entry name" value="GPI_mannosylTrfase"/>
</dbReference>
<dbReference type="PANTHER" id="PTHR22760">
    <property type="entry name" value="GLYCOSYLTRANSFERASE"/>
    <property type="match status" value="1"/>
</dbReference>
<dbReference type="PANTHER" id="PTHR22760:SF4">
    <property type="entry name" value="GPI MANNOSYLTRANSFERASE 3"/>
    <property type="match status" value="1"/>
</dbReference>
<dbReference type="Pfam" id="PF03901">
    <property type="entry name" value="Glyco_transf_22"/>
    <property type="match status" value="1"/>
</dbReference>
<reference key="1">
    <citation type="journal article" date="2007" name="Science">
        <title>The Fusarium graminearum genome reveals a link between localized polymorphism and pathogen specialization.</title>
        <authorList>
            <person name="Cuomo C.A."/>
            <person name="Gueldener U."/>
            <person name="Xu J.-R."/>
            <person name="Trail F."/>
            <person name="Turgeon B.G."/>
            <person name="Di Pietro A."/>
            <person name="Walton J.D."/>
            <person name="Ma L.-J."/>
            <person name="Baker S.E."/>
            <person name="Rep M."/>
            <person name="Adam G."/>
            <person name="Antoniw J."/>
            <person name="Baldwin T."/>
            <person name="Calvo S.E."/>
            <person name="Chang Y.-L."/>
            <person name="DeCaprio D."/>
            <person name="Gale L.R."/>
            <person name="Gnerre S."/>
            <person name="Goswami R.S."/>
            <person name="Hammond-Kosack K."/>
            <person name="Harris L.J."/>
            <person name="Hilburn K."/>
            <person name="Kennell J.C."/>
            <person name="Kroken S."/>
            <person name="Magnuson J.K."/>
            <person name="Mannhaupt G."/>
            <person name="Mauceli E.W."/>
            <person name="Mewes H.-W."/>
            <person name="Mitterbauer R."/>
            <person name="Muehlbauer G."/>
            <person name="Muensterkoetter M."/>
            <person name="Nelson D."/>
            <person name="O'Donnell K."/>
            <person name="Ouellet T."/>
            <person name="Qi W."/>
            <person name="Quesneville H."/>
            <person name="Roncero M.I.G."/>
            <person name="Seong K.-Y."/>
            <person name="Tetko I.V."/>
            <person name="Urban M."/>
            <person name="Waalwijk C."/>
            <person name="Ward T.J."/>
            <person name="Yao J."/>
            <person name="Birren B.W."/>
            <person name="Kistler H.C."/>
        </authorList>
    </citation>
    <scope>NUCLEOTIDE SEQUENCE [LARGE SCALE GENOMIC DNA]</scope>
    <source>
        <strain>ATCC MYA-4620 / CBS 123657 / FGSC 9075 / NRRL 31084 / PH-1</strain>
    </source>
</reference>
<reference key="2">
    <citation type="journal article" date="2010" name="Nature">
        <title>Comparative genomics reveals mobile pathogenicity chromosomes in Fusarium.</title>
        <authorList>
            <person name="Ma L.-J."/>
            <person name="van der Does H.C."/>
            <person name="Borkovich K.A."/>
            <person name="Coleman J.J."/>
            <person name="Daboussi M.-J."/>
            <person name="Di Pietro A."/>
            <person name="Dufresne M."/>
            <person name="Freitag M."/>
            <person name="Grabherr M."/>
            <person name="Henrissat B."/>
            <person name="Houterman P.M."/>
            <person name="Kang S."/>
            <person name="Shim W.-B."/>
            <person name="Woloshuk C."/>
            <person name="Xie X."/>
            <person name="Xu J.-R."/>
            <person name="Antoniw J."/>
            <person name="Baker S.E."/>
            <person name="Bluhm B.H."/>
            <person name="Breakspear A."/>
            <person name="Brown D.W."/>
            <person name="Butchko R.A.E."/>
            <person name="Chapman S."/>
            <person name="Coulson R."/>
            <person name="Coutinho P.M."/>
            <person name="Danchin E.G.J."/>
            <person name="Diener A."/>
            <person name="Gale L.R."/>
            <person name="Gardiner D.M."/>
            <person name="Goff S."/>
            <person name="Hammond-Kosack K.E."/>
            <person name="Hilburn K."/>
            <person name="Hua-Van A."/>
            <person name="Jonkers W."/>
            <person name="Kazan K."/>
            <person name="Kodira C.D."/>
            <person name="Koehrsen M."/>
            <person name="Kumar L."/>
            <person name="Lee Y.-H."/>
            <person name="Li L."/>
            <person name="Manners J.M."/>
            <person name="Miranda-Saavedra D."/>
            <person name="Mukherjee M."/>
            <person name="Park G."/>
            <person name="Park J."/>
            <person name="Park S.-Y."/>
            <person name="Proctor R.H."/>
            <person name="Regev A."/>
            <person name="Ruiz-Roldan M.C."/>
            <person name="Sain D."/>
            <person name="Sakthikumar S."/>
            <person name="Sykes S."/>
            <person name="Schwartz D.C."/>
            <person name="Turgeon B.G."/>
            <person name="Wapinski I."/>
            <person name="Yoder O."/>
            <person name="Young S."/>
            <person name="Zeng Q."/>
            <person name="Zhou S."/>
            <person name="Galagan J."/>
            <person name="Cuomo C.A."/>
            <person name="Kistler H.C."/>
            <person name="Rep M."/>
        </authorList>
    </citation>
    <scope>GENOME REANNOTATION</scope>
    <source>
        <strain>ATCC MYA-4620 / CBS 123657 / FGSC 9075 / NRRL 31084 / PH-1</strain>
    </source>
</reference>
<reference key="3">
    <citation type="journal article" date="2015" name="BMC Genomics">
        <title>The completed genome sequence of the pathogenic ascomycete fungus Fusarium graminearum.</title>
        <authorList>
            <person name="King R."/>
            <person name="Urban M."/>
            <person name="Hammond-Kosack M.C.U."/>
            <person name="Hassani-Pak K."/>
            <person name="Hammond-Kosack K.E."/>
        </authorList>
    </citation>
    <scope>NUCLEOTIDE SEQUENCE [LARGE SCALE GENOMIC DNA]</scope>
    <source>
        <strain>ATCC MYA-4620 / CBS 123657 / FGSC 9075 / NRRL 31084 / PH-1</strain>
    </source>
</reference>
<gene>
    <name type="primary">GPI10</name>
    <name type="ORF">FGRRES_05545</name>
    <name type="ORF">FGSG_05545</name>
</gene>
<sequence length="613" mass="69884">MSSATVSRKSLDEARNQRNRSFFLRDIIVIRLINAWWIATFFQPDEFFQSLEPAWNLAFGSQSGAWLTWEWQHQLRTSLHPALFAGVYLVADFISSHILPVGILRATILVAVPQALQAVIAGLGDWYTWQLAVSIYGANSNVSFFALFLQIFNPWQWYCSTRTFSNSLEMTLTVMAMYYWPWELLGVAQTTKENPKPAPILKSLWSLRASLCLAALAVVLRPTNILIWATIVLFTITRISLQGPSPLTLSTVVTLIREAIWCGSLILAISAASDRWYFGFWTFPAYNFLYFNLSKSLAVFYGRSPWHYYFLQGLPLICTTSLPFAVASLYKPTAHATSTQQFNVLKTLAYTVFTTVGALSLITHKEVRFIYPLLPALSILAAPYTASFFTSQPSPTTNNPRPQPQIRNKRYLFVALGVNMFLAGYLSFFHQPAPLNVLAYLRHEYERIHPDSVQLAQTSHFSAMPENEDELFALFLMPCHSTPWRSHLIYPGLRAYALGCEPPLHTEPNTPERDNYRDEADRFYDDPIPFLTSELFSPTKALTVPRYIVGFESIEPWLQEFVQTFEAQSLGLTQVRPVWKGFNGLFNEDWRRSGDMIVWDTGVYDNAPPTKEL</sequence>
<proteinExistence type="inferred from homology"/>